<gene>
    <name type="primary">yjkA</name>
    <name type="ordered locus">BSU12240</name>
</gene>
<keyword id="KW-1003">Cell membrane</keyword>
<keyword id="KW-0472">Membrane</keyword>
<keyword id="KW-1185">Reference proteome</keyword>
<keyword id="KW-0812">Transmembrane</keyword>
<keyword id="KW-1133">Transmembrane helix</keyword>
<proteinExistence type="inferred from homology"/>
<evidence type="ECO:0000255" key="1"/>
<evidence type="ECO:0000305" key="2"/>
<accession>O34684</accession>
<accession>Q796N5</accession>
<organism>
    <name type="scientific">Bacillus subtilis (strain 168)</name>
    <dbReference type="NCBI Taxonomy" id="224308"/>
    <lineage>
        <taxon>Bacteria</taxon>
        <taxon>Bacillati</taxon>
        <taxon>Bacillota</taxon>
        <taxon>Bacilli</taxon>
        <taxon>Bacillales</taxon>
        <taxon>Bacillaceae</taxon>
        <taxon>Bacillus</taxon>
    </lineage>
</organism>
<reference key="1">
    <citation type="journal article" date="1998" name="Microbiology">
        <title>A 35.7 kb DNA fragment from the Bacillus subtilis chromosome containing a putative 12.3 kb operon involved in hexuronate catabolism and a perfectly symmetrical hypothetical catabolite-responsive element.</title>
        <authorList>
            <person name="Rivolta C."/>
            <person name="Soldo B."/>
            <person name="Lazarevic V."/>
            <person name="Joris B."/>
            <person name="Mauel C."/>
            <person name="Karamata D."/>
        </authorList>
    </citation>
    <scope>NUCLEOTIDE SEQUENCE [GENOMIC DNA]</scope>
    <source>
        <strain>168</strain>
    </source>
</reference>
<reference key="2">
    <citation type="journal article" date="1997" name="Nature">
        <title>The complete genome sequence of the Gram-positive bacterium Bacillus subtilis.</title>
        <authorList>
            <person name="Kunst F."/>
            <person name="Ogasawara N."/>
            <person name="Moszer I."/>
            <person name="Albertini A.M."/>
            <person name="Alloni G."/>
            <person name="Azevedo V."/>
            <person name="Bertero M.G."/>
            <person name="Bessieres P."/>
            <person name="Bolotin A."/>
            <person name="Borchert S."/>
            <person name="Borriss R."/>
            <person name="Boursier L."/>
            <person name="Brans A."/>
            <person name="Braun M."/>
            <person name="Brignell S.C."/>
            <person name="Bron S."/>
            <person name="Brouillet S."/>
            <person name="Bruschi C.V."/>
            <person name="Caldwell B."/>
            <person name="Capuano V."/>
            <person name="Carter N.M."/>
            <person name="Choi S.-K."/>
            <person name="Codani J.-J."/>
            <person name="Connerton I.F."/>
            <person name="Cummings N.J."/>
            <person name="Daniel R.A."/>
            <person name="Denizot F."/>
            <person name="Devine K.M."/>
            <person name="Duesterhoeft A."/>
            <person name="Ehrlich S.D."/>
            <person name="Emmerson P.T."/>
            <person name="Entian K.-D."/>
            <person name="Errington J."/>
            <person name="Fabret C."/>
            <person name="Ferrari E."/>
            <person name="Foulger D."/>
            <person name="Fritz C."/>
            <person name="Fujita M."/>
            <person name="Fujita Y."/>
            <person name="Fuma S."/>
            <person name="Galizzi A."/>
            <person name="Galleron N."/>
            <person name="Ghim S.-Y."/>
            <person name="Glaser P."/>
            <person name="Goffeau A."/>
            <person name="Golightly E.J."/>
            <person name="Grandi G."/>
            <person name="Guiseppi G."/>
            <person name="Guy B.J."/>
            <person name="Haga K."/>
            <person name="Haiech J."/>
            <person name="Harwood C.R."/>
            <person name="Henaut A."/>
            <person name="Hilbert H."/>
            <person name="Holsappel S."/>
            <person name="Hosono S."/>
            <person name="Hullo M.-F."/>
            <person name="Itaya M."/>
            <person name="Jones L.-M."/>
            <person name="Joris B."/>
            <person name="Karamata D."/>
            <person name="Kasahara Y."/>
            <person name="Klaerr-Blanchard M."/>
            <person name="Klein C."/>
            <person name="Kobayashi Y."/>
            <person name="Koetter P."/>
            <person name="Koningstein G."/>
            <person name="Krogh S."/>
            <person name="Kumano M."/>
            <person name="Kurita K."/>
            <person name="Lapidus A."/>
            <person name="Lardinois S."/>
            <person name="Lauber J."/>
            <person name="Lazarevic V."/>
            <person name="Lee S.-M."/>
            <person name="Levine A."/>
            <person name="Liu H."/>
            <person name="Masuda S."/>
            <person name="Mauel C."/>
            <person name="Medigue C."/>
            <person name="Medina N."/>
            <person name="Mellado R.P."/>
            <person name="Mizuno M."/>
            <person name="Moestl D."/>
            <person name="Nakai S."/>
            <person name="Noback M."/>
            <person name="Noone D."/>
            <person name="O'Reilly M."/>
            <person name="Ogawa K."/>
            <person name="Ogiwara A."/>
            <person name="Oudega B."/>
            <person name="Park S.-H."/>
            <person name="Parro V."/>
            <person name="Pohl T.M."/>
            <person name="Portetelle D."/>
            <person name="Porwollik S."/>
            <person name="Prescott A.M."/>
            <person name="Presecan E."/>
            <person name="Pujic P."/>
            <person name="Purnelle B."/>
            <person name="Rapoport G."/>
            <person name="Rey M."/>
            <person name="Reynolds S."/>
            <person name="Rieger M."/>
            <person name="Rivolta C."/>
            <person name="Rocha E."/>
            <person name="Roche B."/>
            <person name="Rose M."/>
            <person name="Sadaie Y."/>
            <person name="Sato T."/>
            <person name="Scanlan E."/>
            <person name="Schleich S."/>
            <person name="Schroeter R."/>
            <person name="Scoffone F."/>
            <person name="Sekiguchi J."/>
            <person name="Sekowska A."/>
            <person name="Seror S.J."/>
            <person name="Serror P."/>
            <person name="Shin B.-S."/>
            <person name="Soldo B."/>
            <person name="Sorokin A."/>
            <person name="Tacconi E."/>
            <person name="Takagi T."/>
            <person name="Takahashi H."/>
            <person name="Takemaru K."/>
            <person name="Takeuchi M."/>
            <person name="Tamakoshi A."/>
            <person name="Tanaka T."/>
            <person name="Terpstra P."/>
            <person name="Tognoni A."/>
            <person name="Tosato V."/>
            <person name="Uchiyama S."/>
            <person name="Vandenbol M."/>
            <person name="Vannier F."/>
            <person name="Vassarotti A."/>
            <person name="Viari A."/>
            <person name="Wambutt R."/>
            <person name="Wedler E."/>
            <person name="Wedler H."/>
            <person name="Weitzenegger T."/>
            <person name="Winters P."/>
            <person name="Wipat A."/>
            <person name="Yamamoto H."/>
            <person name="Yamane K."/>
            <person name="Yasumoto K."/>
            <person name="Yata K."/>
            <person name="Yoshida K."/>
            <person name="Yoshikawa H.-F."/>
            <person name="Zumstein E."/>
            <person name="Yoshikawa H."/>
            <person name="Danchin A."/>
        </authorList>
    </citation>
    <scope>NUCLEOTIDE SEQUENCE [LARGE SCALE GENOMIC DNA]</scope>
    <source>
        <strain>168</strain>
    </source>
</reference>
<comment type="subcellular location">
    <subcellularLocation>
        <location evidence="2">Cell membrane</location>
        <topology evidence="2">Multi-pass membrane protein</topology>
    </subcellularLocation>
</comment>
<comment type="similarity">
    <text evidence="2">Belongs to the UPF0014 family.</text>
</comment>
<sequence length="250" mass="27414">MDYLSLSLTMIFVLIALFLSKSFKAGVEKDMIIATIRAAVQLLIIGYVLSLIFRGDHPVFILLMVLLMLAVAAQNVIKRKKNTIGSFWRVFAALAIVEIVTQGILLSLHIIPLTARYVIPISGMVIGNSMVLSSLFLNRLNSEVGVRKEEIQLILSLGGTPKQSIQRILTSAMKMSMIPTLESQKTLGLVQLPGMMTGQILAGADPIQAVRFQLLIVFTTMASAALTCVILSVLTYPSLFTVHQQLKQNE</sequence>
<dbReference type="EMBL" id="AF015825">
    <property type="protein sequence ID" value="AAC46320.1"/>
    <property type="molecule type" value="Genomic_DNA"/>
</dbReference>
<dbReference type="EMBL" id="AL009126">
    <property type="protein sequence ID" value="CAB13081.1"/>
    <property type="molecule type" value="Genomic_DNA"/>
</dbReference>
<dbReference type="PIR" id="E69851">
    <property type="entry name" value="E69851"/>
</dbReference>
<dbReference type="RefSeq" id="NP_389106.1">
    <property type="nucleotide sequence ID" value="NC_000964.3"/>
</dbReference>
<dbReference type="RefSeq" id="WP_003232776.1">
    <property type="nucleotide sequence ID" value="NZ_OZ025638.1"/>
</dbReference>
<dbReference type="FunCoup" id="O34684">
    <property type="interactions" value="221"/>
</dbReference>
<dbReference type="STRING" id="224308.BSU12240"/>
<dbReference type="PaxDb" id="224308-BSU12240"/>
<dbReference type="EnsemblBacteria" id="CAB13081">
    <property type="protein sequence ID" value="CAB13081"/>
    <property type="gene ID" value="BSU_12240"/>
</dbReference>
<dbReference type="GeneID" id="936453"/>
<dbReference type="KEGG" id="bsu:BSU12240"/>
<dbReference type="PATRIC" id="fig|224308.179.peg.1323"/>
<dbReference type="eggNOG" id="COG0390">
    <property type="taxonomic scope" value="Bacteria"/>
</dbReference>
<dbReference type="InParanoid" id="O34684"/>
<dbReference type="OrthoDB" id="9791807at2"/>
<dbReference type="PhylomeDB" id="O34684"/>
<dbReference type="BioCyc" id="BSUB:BSU12240-MONOMER"/>
<dbReference type="Proteomes" id="UP000001570">
    <property type="component" value="Chromosome"/>
</dbReference>
<dbReference type="GO" id="GO:0005886">
    <property type="term" value="C:plasma membrane"/>
    <property type="evidence" value="ECO:0000318"/>
    <property type="project" value="GO_Central"/>
</dbReference>
<dbReference type="InterPro" id="IPR005226">
    <property type="entry name" value="UPF0014_fam"/>
</dbReference>
<dbReference type="PANTHER" id="PTHR30028:SF0">
    <property type="entry name" value="PROTEIN ALUMINUM SENSITIVE 3"/>
    <property type="match status" value="1"/>
</dbReference>
<dbReference type="PANTHER" id="PTHR30028">
    <property type="entry name" value="UPF0014 INNER MEMBRANE PROTEIN YBBM-RELATED"/>
    <property type="match status" value="1"/>
</dbReference>
<dbReference type="Pfam" id="PF03649">
    <property type="entry name" value="UPF0014"/>
    <property type="match status" value="1"/>
</dbReference>
<protein>
    <recommendedName>
        <fullName>UPF0014 membrane protein YjkA</fullName>
    </recommendedName>
</protein>
<feature type="chain" id="PRO_0000360072" description="UPF0014 membrane protein YjkA">
    <location>
        <begin position="1"/>
        <end position="250"/>
    </location>
</feature>
<feature type="transmembrane region" description="Helical" evidence="1">
    <location>
        <begin position="3"/>
        <end position="23"/>
    </location>
</feature>
<feature type="transmembrane region" description="Helical" evidence="1">
    <location>
        <begin position="32"/>
        <end position="52"/>
    </location>
</feature>
<feature type="transmembrane region" description="Helical" evidence="1">
    <location>
        <begin position="57"/>
        <end position="77"/>
    </location>
</feature>
<feature type="transmembrane region" description="Helical" evidence="1">
    <location>
        <begin position="91"/>
        <end position="111"/>
    </location>
</feature>
<feature type="transmembrane region" description="Helical" evidence="1">
    <location>
        <begin position="117"/>
        <end position="137"/>
    </location>
</feature>
<feature type="transmembrane region" description="Helical" evidence="1">
    <location>
        <begin position="214"/>
        <end position="234"/>
    </location>
</feature>
<name>YJKA_BACSU</name>